<gene>
    <name evidence="1" type="primary">glpK1</name>
    <name type="ordered locus">SSO1600</name>
</gene>
<feature type="chain" id="PRO_0000059533" description="Glycerol kinase 1">
    <location>
        <begin position="1"/>
        <end position="501"/>
    </location>
</feature>
<feature type="binding site" evidence="1">
    <location>
        <position position="16"/>
    </location>
    <ligand>
        <name>ADP</name>
        <dbReference type="ChEBI" id="CHEBI:456216"/>
    </ligand>
</feature>
<feature type="binding site" evidence="1">
    <location>
        <position position="16"/>
    </location>
    <ligand>
        <name>ATP</name>
        <dbReference type="ChEBI" id="CHEBI:30616"/>
    </ligand>
</feature>
<feature type="binding site" evidence="1">
    <location>
        <position position="16"/>
    </location>
    <ligand>
        <name>sn-glycerol 3-phosphate</name>
        <dbReference type="ChEBI" id="CHEBI:57597"/>
    </ligand>
</feature>
<feature type="binding site" evidence="1">
    <location>
        <position position="17"/>
    </location>
    <ligand>
        <name>ATP</name>
        <dbReference type="ChEBI" id="CHEBI:30616"/>
    </ligand>
</feature>
<feature type="binding site" evidence="1">
    <location>
        <position position="18"/>
    </location>
    <ligand>
        <name>ATP</name>
        <dbReference type="ChEBI" id="CHEBI:30616"/>
    </ligand>
</feature>
<feature type="binding site" evidence="1">
    <location>
        <position position="20"/>
    </location>
    <ligand>
        <name>ADP</name>
        <dbReference type="ChEBI" id="CHEBI:456216"/>
    </ligand>
</feature>
<feature type="binding site" evidence="1">
    <location>
        <position position="84"/>
    </location>
    <ligand>
        <name>glycerol</name>
        <dbReference type="ChEBI" id="CHEBI:17754"/>
    </ligand>
</feature>
<feature type="binding site" evidence="1">
    <location>
        <position position="84"/>
    </location>
    <ligand>
        <name>sn-glycerol 3-phosphate</name>
        <dbReference type="ChEBI" id="CHEBI:57597"/>
    </ligand>
</feature>
<feature type="binding site" evidence="1">
    <location>
        <position position="85"/>
    </location>
    <ligand>
        <name>glycerol</name>
        <dbReference type="ChEBI" id="CHEBI:17754"/>
    </ligand>
</feature>
<feature type="binding site" evidence="1">
    <location>
        <position position="85"/>
    </location>
    <ligand>
        <name>sn-glycerol 3-phosphate</name>
        <dbReference type="ChEBI" id="CHEBI:57597"/>
    </ligand>
</feature>
<feature type="binding site" evidence="1">
    <location>
        <position position="135"/>
    </location>
    <ligand>
        <name>glycerol</name>
        <dbReference type="ChEBI" id="CHEBI:17754"/>
    </ligand>
</feature>
<feature type="binding site" evidence="1">
    <location>
        <position position="135"/>
    </location>
    <ligand>
        <name>sn-glycerol 3-phosphate</name>
        <dbReference type="ChEBI" id="CHEBI:57597"/>
    </ligand>
</feature>
<feature type="binding site" evidence="1">
    <location>
        <position position="242"/>
    </location>
    <ligand>
        <name>glycerol</name>
        <dbReference type="ChEBI" id="CHEBI:17754"/>
    </ligand>
</feature>
<feature type="binding site" evidence="1">
    <location>
        <position position="242"/>
    </location>
    <ligand>
        <name>sn-glycerol 3-phosphate</name>
        <dbReference type="ChEBI" id="CHEBI:57597"/>
    </ligand>
</feature>
<feature type="binding site" evidence="1">
    <location>
        <position position="243"/>
    </location>
    <ligand>
        <name>glycerol</name>
        <dbReference type="ChEBI" id="CHEBI:17754"/>
    </ligand>
</feature>
<feature type="binding site" evidence="1">
    <location>
        <position position="264"/>
    </location>
    <ligand>
        <name>ADP</name>
        <dbReference type="ChEBI" id="CHEBI:456216"/>
    </ligand>
</feature>
<feature type="binding site" evidence="1">
    <location>
        <position position="264"/>
    </location>
    <ligand>
        <name>ATP</name>
        <dbReference type="ChEBI" id="CHEBI:30616"/>
    </ligand>
</feature>
<feature type="binding site" evidence="1">
    <location>
        <position position="307"/>
    </location>
    <ligand>
        <name>ADP</name>
        <dbReference type="ChEBI" id="CHEBI:456216"/>
    </ligand>
</feature>
<feature type="binding site" evidence="1">
    <location>
        <position position="307"/>
    </location>
    <ligand>
        <name>ATP</name>
        <dbReference type="ChEBI" id="CHEBI:30616"/>
    </ligand>
</feature>
<feature type="binding site" evidence="1">
    <location>
        <position position="311"/>
    </location>
    <ligand>
        <name>ATP</name>
        <dbReference type="ChEBI" id="CHEBI:30616"/>
    </ligand>
</feature>
<feature type="binding site" evidence="1">
    <location>
        <position position="408"/>
    </location>
    <ligand>
        <name>ADP</name>
        <dbReference type="ChEBI" id="CHEBI:456216"/>
    </ligand>
</feature>
<feature type="binding site" evidence="1">
    <location>
        <position position="408"/>
    </location>
    <ligand>
        <name>ATP</name>
        <dbReference type="ChEBI" id="CHEBI:30616"/>
    </ligand>
</feature>
<accession>Q97XW1</accession>
<name>GLPK1_SACS2</name>
<sequence>MNTMSHKFVLALDEGTTSARAILFDSDLNIVNIGQYEFPQYYPQPGYVEHDPEEIWEAQMLAVKKAISKIDAKQIVAIGITNQRETTVLWDAKSGKPVYNAIVWQDRRTSPITDWLKANYFKMIKDKTGLVPDPYFSASKIKWILDNVPNVREKAERGEIKFGTLDTYLIWRLTNGKAHVTDYSNASRTMLFNINKLECDREILELLKIPESILPEVKPSSEIYGYSEALGNLIPISGDAGDQQAALFGQVAFNVGEIKATYGTGSFILMNIGNNPIRSENLLTTIAWGLEKNKATYALEGSIFITGAAVQWFRDGLRAIDVSDEIEPLASNVEDNGGVYFVPAFVGLGAPYWDPYARGLIIGITRGTTKAHIARAILESMAYQTRDVIEVMQKESGISINSLKVDGGAAKDNLLMQFQADILGIKVIRPKVMETTSMGVAMLAGLGVGLWNSLEELRSIWKVDKEFIPSMSEEKRRALYSGWKEAVKRAMGWAKVVGGQV</sequence>
<reference key="1">
    <citation type="journal article" date="2001" name="Proc. Natl. Acad. Sci. U.S.A.">
        <title>The complete genome of the crenarchaeon Sulfolobus solfataricus P2.</title>
        <authorList>
            <person name="She Q."/>
            <person name="Singh R.K."/>
            <person name="Confalonieri F."/>
            <person name="Zivanovic Y."/>
            <person name="Allard G."/>
            <person name="Awayez M.J."/>
            <person name="Chan-Weiher C.C.-Y."/>
            <person name="Clausen I.G."/>
            <person name="Curtis B.A."/>
            <person name="De Moors A."/>
            <person name="Erauso G."/>
            <person name="Fletcher C."/>
            <person name="Gordon P.M.K."/>
            <person name="Heikamp-de Jong I."/>
            <person name="Jeffries A.C."/>
            <person name="Kozera C.J."/>
            <person name="Medina N."/>
            <person name="Peng X."/>
            <person name="Thi-Ngoc H.P."/>
            <person name="Redder P."/>
            <person name="Schenk M.E."/>
            <person name="Theriault C."/>
            <person name="Tolstrup N."/>
            <person name="Charlebois R.L."/>
            <person name="Doolittle W.F."/>
            <person name="Duguet M."/>
            <person name="Gaasterland T."/>
            <person name="Garrett R.A."/>
            <person name="Ragan M.A."/>
            <person name="Sensen C.W."/>
            <person name="Van der Oost J."/>
        </authorList>
    </citation>
    <scope>NUCLEOTIDE SEQUENCE [LARGE SCALE GENOMIC DNA]</scope>
    <source>
        <strain>ATCC 35092 / DSM 1617 / JCM 11322 / P2</strain>
    </source>
</reference>
<protein>
    <recommendedName>
        <fullName evidence="1">Glycerol kinase 1</fullName>
        <ecNumber evidence="1">2.7.1.30</ecNumber>
    </recommendedName>
    <alternativeName>
        <fullName evidence="1">ATP:glycerol 3-phosphotransferase 1</fullName>
    </alternativeName>
    <alternativeName>
        <fullName evidence="1">Glycerokinase 1</fullName>
        <shortName evidence="1">GK 1</shortName>
    </alternativeName>
</protein>
<dbReference type="EC" id="2.7.1.30" evidence="1"/>
<dbReference type="EMBL" id="AE006641">
    <property type="protein sequence ID" value="AAK41808.1"/>
    <property type="molecule type" value="Genomic_DNA"/>
</dbReference>
<dbReference type="PIR" id="A99319">
    <property type="entry name" value="A99319"/>
</dbReference>
<dbReference type="SMR" id="Q97XW1"/>
<dbReference type="FunCoup" id="Q97XW1">
    <property type="interactions" value="126"/>
</dbReference>
<dbReference type="STRING" id="273057.SSO1600"/>
<dbReference type="PaxDb" id="273057-SSO1600"/>
<dbReference type="EnsemblBacteria" id="AAK41808">
    <property type="protein sequence ID" value="AAK41808"/>
    <property type="gene ID" value="SSO1600"/>
</dbReference>
<dbReference type="KEGG" id="sso:SSO1600"/>
<dbReference type="PATRIC" id="fig|273057.12.peg.1636"/>
<dbReference type="eggNOG" id="arCOG00024">
    <property type="taxonomic scope" value="Archaea"/>
</dbReference>
<dbReference type="HOGENOM" id="CLU_009281_2_3_2"/>
<dbReference type="InParanoid" id="Q97XW1"/>
<dbReference type="PhylomeDB" id="Q97XW1"/>
<dbReference type="UniPathway" id="UPA00618">
    <property type="reaction ID" value="UER00672"/>
</dbReference>
<dbReference type="Proteomes" id="UP000001974">
    <property type="component" value="Chromosome"/>
</dbReference>
<dbReference type="GO" id="GO:0005829">
    <property type="term" value="C:cytosol"/>
    <property type="evidence" value="ECO:0000318"/>
    <property type="project" value="GO_Central"/>
</dbReference>
<dbReference type="GO" id="GO:0005524">
    <property type="term" value="F:ATP binding"/>
    <property type="evidence" value="ECO:0007669"/>
    <property type="project" value="UniProtKB-UniRule"/>
</dbReference>
<dbReference type="GO" id="GO:0004370">
    <property type="term" value="F:glycerol kinase activity"/>
    <property type="evidence" value="ECO:0000250"/>
    <property type="project" value="UniProtKB"/>
</dbReference>
<dbReference type="GO" id="GO:0019563">
    <property type="term" value="P:glycerol catabolic process"/>
    <property type="evidence" value="ECO:0007669"/>
    <property type="project" value="UniProtKB-UniRule"/>
</dbReference>
<dbReference type="GO" id="GO:0006071">
    <property type="term" value="P:glycerol metabolic process"/>
    <property type="evidence" value="ECO:0000250"/>
    <property type="project" value="UniProtKB"/>
</dbReference>
<dbReference type="GO" id="GO:0006072">
    <property type="term" value="P:glycerol-3-phosphate metabolic process"/>
    <property type="evidence" value="ECO:0007669"/>
    <property type="project" value="InterPro"/>
</dbReference>
<dbReference type="CDD" id="cd07786">
    <property type="entry name" value="FGGY_EcGK_like"/>
    <property type="match status" value="1"/>
</dbReference>
<dbReference type="FunFam" id="3.30.420.40:FF:000007">
    <property type="entry name" value="Glycerol kinase"/>
    <property type="match status" value="1"/>
</dbReference>
<dbReference type="FunFam" id="3.30.420.40:FF:000008">
    <property type="entry name" value="Glycerol kinase"/>
    <property type="match status" value="1"/>
</dbReference>
<dbReference type="Gene3D" id="3.30.420.40">
    <property type="match status" value="2"/>
</dbReference>
<dbReference type="HAMAP" id="MF_00186">
    <property type="entry name" value="Glycerol_kin"/>
    <property type="match status" value="1"/>
</dbReference>
<dbReference type="InterPro" id="IPR043129">
    <property type="entry name" value="ATPase_NBD"/>
</dbReference>
<dbReference type="InterPro" id="IPR000577">
    <property type="entry name" value="Carb_kinase_FGGY"/>
</dbReference>
<dbReference type="InterPro" id="IPR018483">
    <property type="entry name" value="Carb_kinase_FGGY_CS"/>
</dbReference>
<dbReference type="InterPro" id="IPR018485">
    <property type="entry name" value="FGGY_C"/>
</dbReference>
<dbReference type="InterPro" id="IPR018484">
    <property type="entry name" value="FGGY_N"/>
</dbReference>
<dbReference type="InterPro" id="IPR005999">
    <property type="entry name" value="Glycerol_kin"/>
</dbReference>
<dbReference type="NCBIfam" id="TIGR01311">
    <property type="entry name" value="glycerol_kin"/>
    <property type="match status" value="1"/>
</dbReference>
<dbReference type="NCBIfam" id="NF000756">
    <property type="entry name" value="PRK00047.1"/>
    <property type="match status" value="1"/>
</dbReference>
<dbReference type="PANTHER" id="PTHR10196:SF69">
    <property type="entry name" value="GLYCEROL KINASE"/>
    <property type="match status" value="1"/>
</dbReference>
<dbReference type="PANTHER" id="PTHR10196">
    <property type="entry name" value="SUGAR KINASE"/>
    <property type="match status" value="1"/>
</dbReference>
<dbReference type="Pfam" id="PF02782">
    <property type="entry name" value="FGGY_C"/>
    <property type="match status" value="1"/>
</dbReference>
<dbReference type="Pfam" id="PF00370">
    <property type="entry name" value="FGGY_N"/>
    <property type="match status" value="1"/>
</dbReference>
<dbReference type="PIRSF" id="PIRSF000538">
    <property type="entry name" value="GlpK"/>
    <property type="match status" value="1"/>
</dbReference>
<dbReference type="SUPFAM" id="SSF53067">
    <property type="entry name" value="Actin-like ATPase domain"/>
    <property type="match status" value="2"/>
</dbReference>
<dbReference type="PROSITE" id="PS00933">
    <property type="entry name" value="FGGY_KINASES_1"/>
    <property type="match status" value="1"/>
</dbReference>
<dbReference type="PROSITE" id="PS00445">
    <property type="entry name" value="FGGY_KINASES_2"/>
    <property type="match status" value="1"/>
</dbReference>
<evidence type="ECO:0000255" key="1">
    <source>
        <dbReference type="HAMAP-Rule" id="MF_00186"/>
    </source>
</evidence>
<organism>
    <name type="scientific">Saccharolobus solfataricus (strain ATCC 35092 / DSM 1617 / JCM 11322 / P2)</name>
    <name type="common">Sulfolobus solfataricus</name>
    <dbReference type="NCBI Taxonomy" id="273057"/>
    <lineage>
        <taxon>Archaea</taxon>
        <taxon>Thermoproteota</taxon>
        <taxon>Thermoprotei</taxon>
        <taxon>Sulfolobales</taxon>
        <taxon>Sulfolobaceae</taxon>
        <taxon>Saccharolobus</taxon>
    </lineage>
</organism>
<comment type="function">
    <text evidence="1">Key enzyme in the regulation of glycerol uptake and metabolism. Catalyzes the phosphorylation of glycerol to yield sn-glycerol 3-phosphate.</text>
</comment>
<comment type="catalytic activity">
    <reaction evidence="1">
        <text>glycerol + ATP = sn-glycerol 3-phosphate + ADP + H(+)</text>
        <dbReference type="Rhea" id="RHEA:21644"/>
        <dbReference type="ChEBI" id="CHEBI:15378"/>
        <dbReference type="ChEBI" id="CHEBI:17754"/>
        <dbReference type="ChEBI" id="CHEBI:30616"/>
        <dbReference type="ChEBI" id="CHEBI:57597"/>
        <dbReference type="ChEBI" id="CHEBI:456216"/>
        <dbReference type="EC" id="2.7.1.30"/>
    </reaction>
</comment>
<comment type="pathway">
    <text evidence="1">Polyol metabolism; glycerol degradation via glycerol kinase pathway; sn-glycerol 3-phosphate from glycerol: step 1/1.</text>
</comment>
<comment type="similarity">
    <text evidence="1">Belongs to the FGGY kinase family.</text>
</comment>
<keyword id="KW-0067">ATP-binding</keyword>
<keyword id="KW-0319">Glycerol metabolism</keyword>
<keyword id="KW-0418">Kinase</keyword>
<keyword id="KW-0547">Nucleotide-binding</keyword>
<keyword id="KW-1185">Reference proteome</keyword>
<keyword id="KW-0808">Transferase</keyword>
<proteinExistence type="inferred from homology"/>